<protein>
    <recommendedName>
        <fullName evidence="1">NADPH-dependent 7-cyano-7-deazaguanine reductase</fullName>
        <ecNumber evidence="1">1.7.1.13</ecNumber>
    </recommendedName>
    <alternativeName>
        <fullName evidence="1">7-cyano-7-carbaguanine reductase</fullName>
    </alternativeName>
    <alternativeName>
        <fullName evidence="1">NADPH-dependent nitrile oxidoreductase</fullName>
    </alternativeName>
    <alternativeName>
        <fullName evidence="1">PreQ(0) reductase</fullName>
    </alternativeName>
</protein>
<dbReference type="EC" id="1.7.1.13" evidence="1"/>
<dbReference type="EMBL" id="CP000124">
    <property type="protein sequence ID" value="ABA49880.1"/>
    <property type="molecule type" value="Genomic_DNA"/>
</dbReference>
<dbReference type="RefSeq" id="WP_004526121.1">
    <property type="nucleotide sequence ID" value="NC_007434.1"/>
</dbReference>
<dbReference type="SMR" id="Q3JW01"/>
<dbReference type="EnsemblBacteria" id="ABA49880">
    <property type="protein sequence ID" value="ABA49880"/>
    <property type="gene ID" value="BURPS1710b_0839"/>
</dbReference>
<dbReference type="KEGG" id="bpm:BURPS1710b_0839"/>
<dbReference type="HOGENOM" id="CLU_054738_0_0_4"/>
<dbReference type="UniPathway" id="UPA00392"/>
<dbReference type="Proteomes" id="UP000002700">
    <property type="component" value="Chromosome I"/>
</dbReference>
<dbReference type="GO" id="GO:0005737">
    <property type="term" value="C:cytoplasm"/>
    <property type="evidence" value="ECO:0007669"/>
    <property type="project" value="UniProtKB-SubCell"/>
</dbReference>
<dbReference type="GO" id="GO:0033739">
    <property type="term" value="F:preQ1 synthase activity"/>
    <property type="evidence" value="ECO:0007669"/>
    <property type="project" value="UniProtKB-UniRule"/>
</dbReference>
<dbReference type="GO" id="GO:0008616">
    <property type="term" value="P:queuosine biosynthetic process"/>
    <property type="evidence" value="ECO:0007669"/>
    <property type="project" value="UniProtKB-UniRule"/>
</dbReference>
<dbReference type="GO" id="GO:0006400">
    <property type="term" value="P:tRNA modification"/>
    <property type="evidence" value="ECO:0007669"/>
    <property type="project" value="UniProtKB-UniRule"/>
</dbReference>
<dbReference type="Gene3D" id="3.30.1130.10">
    <property type="match status" value="2"/>
</dbReference>
<dbReference type="HAMAP" id="MF_00817">
    <property type="entry name" value="QueF_type2"/>
    <property type="match status" value="1"/>
</dbReference>
<dbReference type="InterPro" id="IPR043133">
    <property type="entry name" value="GTP-CH-I_C/QueF"/>
</dbReference>
<dbReference type="InterPro" id="IPR050084">
    <property type="entry name" value="NADPH_dep_7-cyano-7-deazaG_red"/>
</dbReference>
<dbReference type="InterPro" id="IPR029500">
    <property type="entry name" value="QueF"/>
</dbReference>
<dbReference type="InterPro" id="IPR029139">
    <property type="entry name" value="QueF_N"/>
</dbReference>
<dbReference type="InterPro" id="IPR016428">
    <property type="entry name" value="QueF_type2"/>
</dbReference>
<dbReference type="NCBIfam" id="TIGR03138">
    <property type="entry name" value="QueF"/>
    <property type="match status" value="1"/>
</dbReference>
<dbReference type="PANTHER" id="PTHR34354">
    <property type="entry name" value="NADPH-DEPENDENT 7-CYANO-7-DEAZAGUANINE REDUCTASE"/>
    <property type="match status" value="1"/>
</dbReference>
<dbReference type="PANTHER" id="PTHR34354:SF1">
    <property type="entry name" value="NADPH-DEPENDENT 7-CYANO-7-DEAZAGUANINE REDUCTASE"/>
    <property type="match status" value="1"/>
</dbReference>
<dbReference type="Pfam" id="PF14489">
    <property type="entry name" value="QueF"/>
    <property type="match status" value="1"/>
</dbReference>
<dbReference type="Pfam" id="PF14819">
    <property type="entry name" value="QueF_N"/>
    <property type="match status" value="1"/>
</dbReference>
<dbReference type="PIRSF" id="PIRSF004750">
    <property type="entry name" value="Nitrile_oxidored_YqcD_prd"/>
    <property type="match status" value="1"/>
</dbReference>
<dbReference type="SUPFAM" id="SSF55620">
    <property type="entry name" value="Tetrahydrobiopterin biosynthesis enzymes-like"/>
    <property type="match status" value="1"/>
</dbReference>
<evidence type="ECO:0000255" key="1">
    <source>
        <dbReference type="HAMAP-Rule" id="MF_00817"/>
    </source>
</evidence>
<gene>
    <name evidence="1" type="primary">queF</name>
    <name type="ordered locus">BURPS1710b_0839</name>
</gene>
<feature type="chain" id="PRO_0000247704" description="NADPH-dependent 7-cyano-7-deazaguanine reductase">
    <location>
        <begin position="1"/>
        <end position="274"/>
    </location>
</feature>
<feature type="active site" description="Thioimide intermediate" evidence="1">
    <location>
        <position position="181"/>
    </location>
</feature>
<feature type="active site" description="Proton donor" evidence="1">
    <location>
        <position position="188"/>
    </location>
</feature>
<feature type="binding site" evidence="1">
    <location>
        <begin position="80"/>
        <end position="82"/>
    </location>
    <ligand>
        <name>substrate</name>
    </ligand>
</feature>
<feature type="binding site" evidence="1">
    <location>
        <begin position="82"/>
        <end position="83"/>
    </location>
    <ligand>
        <name>NADPH</name>
        <dbReference type="ChEBI" id="CHEBI:57783"/>
    </ligand>
</feature>
<feature type="binding site" evidence="1">
    <location>
        <begin position="220"/>
        <end position="221"/>
    </location>
    <ligand>
        <name>substrate</name>
    </ligand>
</feature>
<feature type="binding site" evidence="1">
    <location>
        <begin position="249"/>
        <end position="250"/>
    </location>
    <ligand>
        <name>NADPH</name>
        <dbReference type="ChEBI" id="CHEBI:57783"/>
    </ligand>
</feature>
<accession>Q3JW01</accession>
<name>QUEF_BURP1</name>
<proteinExistence type="inferred from homology"/>
<sequence>MNPEHSPLGKATVYANQYDASLLFPIPRAGAREQIGIGAPLPFFGTDIWNAYELSWLNARGKPQIAIATFYVPAESPNIVESKSFKLYLGSFAQTAFESADAVRDALKRDVSAACDASVTVRLATPAEFRKLQMDELDGLSLDRLDLDAHVYETDPSFLTASHGEAPVEETLVTDLLKSNCPVTGQPDWGSVQIHYVGAPIDHAGLLRYIISFRNHTGFHEQCVERIFVDILRACQPVKLAVYARYTRRGGLDINPFRTNYNQPMPDNARTARQ</sequence>
<comment type="function">
    <text evidence="1">Catalyzes the NADPH-dependent reduction of 7-cyano-7-deazaguanine (preQ0) to 7-aminomethyl-7-deazaguanine (preQ1).</text>
</comment>
<comment type="catalytic activity">
    <reaction evidence="1">
        <text>7-aminomethyl-7-carbaguanine + 2 NADP(+) = 7-cyano-7-deazaguanine + 2 NADPH + 3 H(+)</text>
        <dbReference type="Rhea" id="RHEA:13409"/>
        <dbReference type="ChEBI" id="CHEBI:15378"/>
        <dbReference type="ChEBI" id="CHEBI:45075"/>
        <dbReference type="ChEBI" id="CHEBI:57783"/>
        <dbReference type="ChEBI" id="CHEBI:58349"/>
        <dbReference type="ChEBI" id="CHEBI:58703"/>
        <dbReference type="EC" id="1.7.1.13"/>
    </reaction>
</comment>
<comment type="pathway">
    <text evidence="1">tRNA modification; tRNA-queuosine biosynthesis.</text>
</comment>
<comment type="subunit">
    <text evidence="1">Homodimer.</text>
</comment>
<comment type="subcellular location">
    <subcellularLocation>
        <location evidence="1">Cytoplasm</location>
    </subcellularLocation>
</comment>
<comment type="similarity">
    <text evidence="1">Belongs to the GTP cyclohydrolase I family. QueF type 2 subfamily.</text>
</comment>
<reference key="1">
    <citation type="journal article" date="2010" name="Genome Biol. Evol.">
        <title>Continuing evolution of Burkholderia mallei through genome reduction and large-scale rearrangements.</title>
        <authorList>
            <person name="Losada L."/>
            <person name="Ronning C.M."/>
            <person name="DeShazer D."/>
            <person name="Woods D."/>
            <person name="Fedorova N."/>
            <person name="Kim H.S."/>
            <person name="Shabalina S.A."/>
            <person name="Pearson T.R."/>
            <person name="Brinkac L."/>
            <person name="Tan P."/>
            <person name="Nandi T."/>
            <person name="Crabtree J."/>
            <person name="Badger J."/>
            <person name="Beckstrom-Sternberg S."/>
            <person name="Saqib M."/>
            <person name="Schutzer S.E."/>
            <person name="Keim P."/>
            <person name="Nierman W.C."/>
        </authorList>
    </citation>
    <scope>NUCLEOTIDE SEQUENCE [LARGE SCALE GENOMIC DNA]</scope>
    <source>
        <strain>1710b</strain>
    </source>
</reference>
<keyword id="KW-0963">Cytoplasm</keyword>
<keyword id="KW-0521">NADP</keyword>
<keyword id="KW-0560">Oxidoreductase</keyword>
<keyword id="KW-0671">Queuosine biosynthesis</keyword>
<organism>
    <name type="scientific">Burkholderia pseudomallei (strain 1710b)</name>
    <dbReference type="NCBI Taxonomy" id="320372"/>
    <lineage>
        <taxon>Bacteria</taxon>
        <taxon>Pseudomonadati</taxon>
        <taxon>Pseudomonadota</taxon>
        <taxon>Betaproteobacteria</taxon>
        <taxon>Burkholderiales</taxon>
        <taxon>Burkholderiaceae</taxon>
        <taxon>Burkholderia</taxon>
        <taxon>pseudomallei group</taxon>
    </lineage>
</organism>